<gene>
    <name evidence="1" type="primary">ribA</name>
    <name type="ordered locus">Shewana3_2600</name>
</gene>
<dbReference type="EC" id="3.5.4.25" evidence="1"/>
<dbReference type="EMBL" id="CP000469">
    <property type="protein sequence ID" value="ABK48827.1"/>
    <property type="molecule type" value="Genomic_DNA"/>
</dbReference>
<dbReference type="RefSeq" id="WP_011717499.1">
    <property type="nucleotide sequence ID" value="NC_008577.1"/>
</dbReference>
<dbReference type="SMR" id="A0KYF8"/>
<dbReference type="STRING" id="94122.Shewana3_2600"/>
<dbReference type="KEGG" id="shn:Shewana3_2600"/>
<dbReference type="eggNOG" id="COG0807">
    <property type="taxonomic scope" value="Bacteria"/>
</dbReference>
<dbReference type="HOGENOM" id="CLU_020273_2_1_6"/>
<dbReference type="OrthoDB" id="9793111at2"/>
<dbReference type="UniPathway" id="UPA00275">
    <property type="reaction ID" value="UER00400"/>
</dbReference>
<dbReference type="Proteomes" id="UP000002589">
    <property type="component" value="Chromosome"/>
</dbReference>
<dbReference type="GO" id="GO:0005829">
    <property type="term" value="C:cytosol"/>
    <property type="evidence" value="ECO:0007669"/>
    <property type="project" value="TreeGrafter"/>
</dbReference>
<dbReference type="GO" id="GO:0005525">
    <property type="term" value="F:GTP binding"/>
    <property type="evidence" value="ECO:0007669"/>
    <property type="project" value="UniProtKB-KW"/>
</dbReference>
<dbReference type="GO" id="GO:0003935">
    <property type="term" value="F:GTP cyclohydrolase II activity"/>
    <property type="evidence" value="ECO:0007669"/>
    <property type="project" value="UniProtKB-UniRule"/>
</dbReference>
<dbReference type="GO" id="GO:0008270">
    <property type="term" value="F:zinc ion binding"/>
    <property type="evidence" value="ECO:0007669"/>
    <property type="project" value="UniProtKB-UniRule"/>
</dbReference>
<dbReference type="GO" id="GO:0009231">
    <property type="term" value="P:riboflavin biosynthetic process"/>
    <property type="evidence" value="ECO:0007669"/>
    <property type="project" value="UniProtKB-UniRule"/>
</dbReference>
<dbReference type="CDD" id="cd00641">
    <property type="entry name" value="GTP_cyclohydro2"/>
    <property type="match status" value="1"/>
</dbReference>
<dbReference type="FunFam" id="3.40.50.10990:FF:000002">
    <property type="entry name" value="GTP cyclohydrolase-2"/>
    <property type="match status" value="1"/>
</dbReference>
<dbReference type="Gene3D" id="3.40.50.10990">
    <property type="entry name" value="GTP cyclohydrolase II"/>
    <property type="match status" value="1"/>
</dbReference>
<dbReference type="HAMAP" id="MF_00179">
    <property type="entry name" value="RibA"/>
    <property type="match status" value="1"/>
</dbReference>
<dbReference type="InterPro" id="IPR032677">
    <property type="entry name" value="GTP_cyclohydro_II"/>
</dbReference>
<dbReference type="InterPro" id="IPR000926">
    <property type="entry name" value="RibA"/>
</dbReference>
<dbReference type="InterPro" id="IPR036144">
    <property type="entry name" value="RibA-like_sf"/>
</dbReference>
<dbReference type="NCBIfam" id="NF001591">
    <property type="entry name" value="PRK00393.1"/>
    <property type="match status" value="1"/>
</dbReference>
<dbReference type="NCBIfam" id="TIGR00505">
    <property type="entry name" value="ribA"/>
    <property type="match status" value="1"/>
</dbReference>
<dbReference type="PANTHER" id="PTHR21327:SF18">
    <property type="entry name" value="3,4-DIHYDROXY-2-BUTANONE 4-PHOSPHATE SYNTHASE"/>
    <property type="match status" value="1"/>
</dbReference>
<dbReference type="PANTHER" id="PTHR21327">
    <property type="entry name" value="GTP CYCLOHYDROLASE II-RELATED"/>
    <property type="match status" value="1"/>
</dbReference>
<dbReference type="Pfam" id="PF00925">
    <property type="entry name" value="GTP_cyclohydro2"/>
    <property type="match status" value="1"/>
</dbReference>
<dbReference type="SUPFAM" id="SSF142695">
    <property type="entry name" value="RibA-like"/>
    <property type="match status" value="1"/>
</dbReference>
<accession>A0KYF8</accession>
<comment type="function">
    <text evidence="1">Catalyzes the conversion of GTP to 2,5-diamino-6-ribosylamino-4(3H)-pyrimidinone 5'-phosphate (DARP), formate and pyrophosphate.</text>
</comment>
<comment type="catalytic activity">
    <reaction evidence="1">
        <text>GTP + 4 H2O = 2,5-diamino-6-hydroxy-4-(5-phosphoribosylamino)-pyrimidine + formate + 2 phosphate + 3 H(+)</text>
        <dbReference type="Rhea" id="RHEA:23704"/>
        <dbReference type="ChEBI" id="CHEBI:15377"/>
        <dbReference type="ChEBI" id="CHEBI:15378"/>
        <dbReference type="ChEBI" id="CHEBI:15740"/>
        <dbReference type="ChEBI" id="CHEBI:37565"/>
        <dbReference type="ChEBI" id="CHEBI:43474"/>
        <dbReference type="ChEBI" id="CHEBI:58614"/>
        <dbReference type="EC" id="3.5.4.25"/>
    </reaction>
</comment>
<comment type="cofactor">
    <cofactor evidence="1">
        <name>Zn(2+)</name>
        <dbReference type="ChEBI" id="CHEBI:29105"/>
    </cofactor>
    <text evidence="1">Binds 1 zinc ion per subunit.</text>
</comment>
<comment type="pathway">
    <text evidence="1">Cofactor biosynthesis; riboflavin biosynthesis; 5-amino-6-(D-ribitylamino)uracil from GTP: step 1/4.</text>
</comment>
<comment type="similarity">
    <text evidence="1">Belongs to the GTP cyclohydrolase II family.</text>
</comment>
<organism>
    <name type="scientific">Shewanella sp. (strain ANA-3)</name>
    <dbReference type="NCBI Taxonomy" id="94122"/>
    <lineage>
        <taxon>Bacteria</taxon>
        <taxon>Pseudomonadati</taxon>
        <taxon>Pseudomonadota</taxon>
        <taxon>Gammaproteobacteria</taxon>
        <taxon>Alteromonadales</taxon>
        <taxon>Shewanellaceae</taxon>
        <taxon>Shewanella</taxon>
    </lineage>
</organism>
<evidence type="ECO:0000255" key="1">
    <source>
        <dbReference type="HAMAP-Rule" id="MF_00179"/>
    </source>
</evidence>
<feature type="chain" id="PRO_1000040585" description="GTP cyclohydrolase-2">
    <location>
        <begin position="1"/>
        <end position="203"/>
    </location>
</feature>
<feature type="active site" description="Proton acceptor" evidence="1">
    <location>
        <position position="126"/>
    </location>
</feature>
<feature type="active site" description="Nucleophile" evidence="1">
    <location>
        <position position="128"/>
    </location>
</feature>
<feature type="binding site" evidence="1">
    <location>
        <begin position="49"/>
        <end position="53"/>
    </location>
    <ligand>
        <name>GTP</name>
        <dbReference type="ChEBI" id="CHEBI:37565"/>
    </ligand>
</feature>
<feature type="binding site" evidence="1">
    <location>
        <position position="54"/>
    </location>
    <ligand>
        <name>Zn(2+)</name>
        <dbReference type="ChEBI" id="CHEBI:29105"/>
        <note>catalytic</note>
    </ligand>
</feature>
<feature type="binding site" evidence="1">
    <location>
        <position position="65"/>
    </location>
    <ligand>
        <name>Zn(2+)</name>
        <dbReference type="ChEBI" id="CHEBI:29105"/>
        <note>catalytic</note>
    </ligand>
</feature>
<feature type="binding site" evidence="1">
    <location>
        <position position="67"/>
    </location>
    <ligand>
        <name>Zn(2+)</name>
        <dbReference type="ChEBI" id="CHEBI:29105"/>
        <note>catalytic</note>
    </ligand>
</feature>
<feature type="binding site" evidence="1">
    <location>
        <position position="70"/>
    </location>
    <ligand>
        <name>GTP</name>
        <dbReference type="ChEBI" id="CHEBI:37565"/>
    </ligand>
</feature>
<feature type="binding site" evidence="1">
    <location>
        <begin position="92"/>
        <end position="94"/>
    </location>
    <ligand>
        <name>GTP</name>
        <dbReference type="ChEBI" id="CHEBI:37565"/>
    </ligand>
</feature>
<feature type="binding site" evidence="1">
    <location>
        <position position="114"/>
    </location>
    <ligand>
        <name>GTP</name>
        <dbReference type="ChEBI" id="CHEBI:37565"/>
    </ligand>
</feature>
<feature type="binding site" evidence="1">
    <location>
        <position position="149"/>
    </location>
    <ligand>
        <name>GTP</name>
        <dbReference type="ChEBI" id="CHEBI:37565"/>
    </ligand>
</feature>
<feature type="binding site" evidence="1">
    <location>
        <position position="154"/>
    </location>
    <ligand>
        <name>GTP</name>
        <dbReference type="ChEBI" id="CHEBI:37565"/>
    </ligand>
</feature>
<sequence length="203" mass="22838">MSIKYVATSKLPTPWGVFAMHGFEDTETSKEHVALTFGTLSSDAPVLGRIHSECLTGDALFSLRCDCGFQLQTAMQNIAETGSGFILYLRQEGRGIGLLNKIRAYELQDKGANTVEANEQLGFPADMRKYDMIQPMLEQIGVKHVRLMTNNPRKVKAMKEIGIEVVERVPLQVGKNRYNEAYLKTKSTELGHMMSEYHFTDEE</sequence>
<proteinExistence type="inferred from homology"/>
<protein>
    <recommendedName>
        <fullName evidence="1">GTP cyclohydrolase-2</fullName>
        <ecNumber evidence="1">3.5.4.25</ecNumber>
    </recommendedName>
    <alternativeName>
        <fullName evidence="1">GTP cyclohydrolase II</fullName>
    </alternativeName>
</protein>
<name>RIBA_SHESA</name>
<reference key="1">
    <citation type="submission" date="2006-09" db="EMBL/GenBank/DDBJ databases">
        <title>Complete sequence of chromosome 1 of Shewanella sp. ANA-3.</title>
        <authorList>
            <person name="Copeland A."/>
            <person name="Lucas S."/>
            <person name="Lapidus A."/>
            <person name="Barry K."/>
            <person name="Detter J.C."/>
            <person name="Glavina del Rio T."/>
            <person name="Hammon N."/>
            <person name="Israni S."/>
            <person name="Dalin E."/>
            <person name="Tice H."/>
            <person name="Pitluck S."/>
            <person name="Chertkov O."/>
            <person name="Brettin T."/>
            <person name="Bruce D."/>
            <person name="Han C."/>
            <person name="Tapia R."/>
            <person name="Gilna P."/>
            <person name="Schmutz J."/>
            <person name="Larimer F."/>
            <person name="Land M."/>
            <person name="Hauser L."/>
            <person name="Kyrpides N."/>
            <person name="Kim E."/>
            <person name="Newman D."/>
            <person name="Salticov C."/>
            <person name="Konstantinidis K."/>
            <person name="Klappenback J."/>
            <person name="Tiedje J."/>
            <person name="Richardson P."/>
        </authorList>
    </citation>
    <scope>NUCLEOTIDE SEQUENCE [LARGE SCALE GENOMIC DNA]</scope>
    <source>
        <strain>ANA-3</strain>
    </source>
</reference>
<keyword id="KW-0342">GTP-binding</keyword>
<keyword id="KW-0378">Hydrolase</keyword>
<keyword id="KW-0479">Metal-binding</keyword>
<keyword id="KW-0547">Nucleotide-binding</keyword>
<keyword id="KW-0686">Riboflavin biosynthesis</keyword>
<keyword id="KW-0862">Zinc</keyword>